<protein>
    <recommendedName>
        <fullName evidence="1">Ribosomal protein L11 methyltransferase</fullName>
        <shortName evidence="1">L11 Mtase</shortName>
        <ecNumber evidence="1">2.1.1.-</ecNumber>
    </recommendedName>
</protein>
<dbReference type="EC" id="2.1.1.-" evidence="1"/>
<dbReference type="EMBL" id="CP001291">
    <property type="protein sequence ID" value="ACK72172.1"/>
    <property type="molecule type" value="Genomic_DNA"/>
</dbReference>
<dbReference type="RefSeq" id="WP_015955764.1">
    <property type="nucleotide sequence ID" value="NC_011729.1"/>
</dbReference>
<dbReference type="SMR" id="B7KJ88"/>
<dbReference type="STRING" id="65393.PCC7424_3791"/>
<dbReference type="KEGG" id="cyc:PCC7424_3791"/>
<dbReference type="eggNOG" id="COG2264">
    <property type="taxonomic scope" value="Bacteria"/>
</dbReference>
<dbReference type="HOGENOM" id="CLU_049382_0_1_3"/>
<dbReference type="OrthoDB" id="9785995at2"/>
<dbReference type="Proteomes" id="UP000002384">
    <property type="component" value="Chromosome"/>
</dbReference>
<dbReference type="GO" id="GO:0005737">
    <property type="term" value="C:cytoplasm"/>
    <property type="evidence" value="ECO:0007669"/>
    <property type="project" value="UniProtKB-SubCell"/>
</dbReference>
<dbReference type="GO" id="GO:0016279">
    <property type="term" value="F:protein-lysine N-methyltransferase activity"/>
    <property type="evidence" value="ECO:0007669"/>
    <property type="project" value="RHEA"/>
</dbReference>
<dbReference type="GO" id="GO:0032259">
    <property type="term" value="P:methylation"/>
    <property type="evidence" value="ECO:0007669"/>
    <property type="project" value="UniProtKB-KW"/>
</dbReference>
<dbReference type="CDD" id="cd02440">
    <property type="entry name" value="AdoMet_MTases"/>
    <property type="match status" value="1"/>
</dbReference>
<dbReference type="Gene3D" id="3.40.50.150">
    <property type="entry name" value="Vaccinia Virus protein VP39"/>
    <property type="match status" value="1"/>
</dbReference>
<dbReference type="HAMAP" id="MF_00735">
    <property type="entry name" value="Methyltr_PrmA"/>
    <property type="match status" value="1"/>
</dbReference>
<dbReference type="InterPro" id="IPR050078">
    <property type="entry name" value="Ribosomal_L11_MeTrfase_PrmA"/>
</dbReference>
<dbReference type="InterPro" id="IPR004498">
    <property type="entry name" value="Ribosomal_PrmA_MeTrfase"/>
</dbReference>
<dbReference type="InterPro" id="IPR029063">
    <property type="entry name" value="SAM-dependent_MTases_sf"/>
</dbReference>
<dbReference type="NCBIfam" id="TIGR00406">
    <property type="entry name" value="prmA"/>
    <property type="match status" value="1"/>
</dbReference>
<dbReference type="PANTHER" id="PTHR43648">
    <property type="entry name" value="ELECTRON TRANSFER FLAVOPROTEIN BETA SUBUNIT LYSINE METHYLTRANSFERASE"/>
    <property type="match status" value="1"/>
</dbReference>
<dbReference type="PANTHER" id="PTHR43648:SF1">
    <property type="entry name" value="ELECTRON TRANSFER FLAVOPROTEIN BETA SUBUNIT LYSINE METHYLTRANSFERASE"/>
    <property type="match status" value="1"/>
</dbReference>
<dbReference type="Pfam" id="PF06325">
    <property type="entry name" value="PrmA"/>
    <property type="match status" value="1"/>
</dbReference>
<dbReference type="PIRSF" id="PIRSF000401">
    <property type="entry name" value="RPL11_MTase"/>
    <property type="match status" value="1"/>
</dbReference>
<dbReference type="SUPFAM" id="SSF53335">
    <property type="entry name" value="S-adenosyl-L-methionine-dependent methyltransferases"/>
    <property type="match status" value="1"/>
</dbReference>
<reference key="1">
    <citation type="journal article" date="2011" name="MBio">
        <title>Novel metabolic attributes of the genus Cyanothece, comprising a group of unicellular nitrogen-fixing Cyanobacteria.</title>
        <authorList>
            <person name="Bandyopadhyay A."/>
            <person name="Elvitigala T."/>
            <person name="Welsh E."/>
            <person name="Stockel J."/>
            <person name="Liberton M."/>
            <person name="Min H."/>
            <person name="Sherman L.A."/>
            <person name="Pakrasi H.B."/>
        </authorList>
    </citation>
    <scope>NUCLEOTIDE SEQUENCE [LARGE SCALE GENOMIC DNA]</scope>
    <source>
        <strain>PCC 7424</strain>
    </source>
</reference>
<sequence>MANSWWEIQVLCDPNLEESVFWRLDKFGCSGTATEIKGQSSVIKAYIPQITTQLLDLAALSLWLIQDALLVNLPRPITRWRLIDEEDWASSWKQHWQPTEIGDRMIIYPAWLTPPTDTDQIIIRLDPGSAFGTGTHATTQLCLESLEMRLTMDAEPVTLADIGCGSGILSIGAILLGAQKVYAVDTDPLAVSATRSNRHLNEIDPNHLIVNQGSIEQLLDLIPGQVDGIVCNILAEVIMDMIPQFTALTKPKSWAILSGILLEQAKPIADTLEQHDWVVAALWKRGDWCCFNIRKNSD</sequence>
<evidence type="ECO:0000255" key="1">
    <source>
        <dbReference type="HAMAP-Rule" id="MF_00735"/>
    </source>
</evidence>
<accession>B7KJ88</accession>
<comment type="function">
    <text evidence="1">Methylates ribosomal protein L11.</text>
</comment>
<comment type="catalytic activity">
    <reaction evidence="1">
        <text>L-lysyl-[protein] + 3 S-adenosyl-L-methionine = N(6),N(6),N(6)-trimethyl-L-lysyl-[protein] + 3 S-adenosyl-L-homocysteine + 3 H(+)</text>
        <dbReference type="Rhea" id="RHEA:54192"/>
        <dbReference type="Rhea" id="RHEA-COMP:9752"/>
        <dbReference type="Rhea" id="RHEA-COMP:13826"/>
        <dbReference type="ChEBI" id="CHEBI:15378"/>
        <dbReference type="ChEBI" id="CHEBI:29969"/>
        <dbReference type="ChEBI" id="CHEBI:57856"/>
        <dbReference type="ChEBI" id="CHEBI:59789"/>
        <dbReference type="ChEBI" id="CHEBI:61961"/>
    </reaction>
</comment>
<comment type="subcellular location">
    <subcellularLocation>
        <location evidence="1">Cytoplasm</location>
    </subcellularLocation>
</comment>
<comment type="similarity">
    <text evidence="1">Belongs to the methyltransferase superfamily. PrmA family.</text>
</comment>
<feature type="chain" id="PRO_1000192612" description="Ribosomal protein L11 methyltransferase">
    <location>
        <begin position="1"/>
        <end position="298"/>
    </location>
</feature>
<feature type="binding site" evidence="1">
    <location>
        <position position="139"/>
    </location>
    <ligand>
        <name>S-adenosyl-L-methionine</name>
        <dbReference type="ChEBI" id="CHEBI:59789"/>
    </ligand>
</feature>
<feature type="binding site" evidence="1">
    <location>
        <position position="163"/>
    </location>
    <ligand>
        <name>S-adenosyl-L-methionine</name>
        <dbReference type="ChEBI" id="CHEBI:59789"/>
    </ligand>
</feature>
<feature type="binding site" evidence="1">
    <location>
        <position position="185"/>
    </location>
    <ligand>
        <name>S-adenosyl-L-methionine</name>
        <dbReference type="ChEBI" id="CHEBI:59789"/>
    </ligand>
</feature>
<feature type="binding site" evidence="1">
    <location>
        <position position="232"/>
    </location>
    <ligand>
        <name>S-adenosyl-L-methionine</name>
        <dbReference type="ChEBI" id="CHEBI:59789"/>
    </ligand>
</feature>
<proteinExistence type="inferred from homology"/>
<organism>
    <name type="scientific">Gloeothece citriformis (strain PCC 7424)</name>
    <name type="common">Cyanothece sp. (strain PCC 7424)</name>
    <dbReference type="NCBI Taxonomy" id="65393"/>
    <lineage>
        <taxon>Bacteria</taxon>
        <taxon>Bacillati</taxon>
        <taxon>Cyanobacteriota</taxon>
        <taxon>Cyanophyceae</taxon>
        <taxon>Oscillatoriophycideae</taxon>
        <taxon>Chroococcales</taxon>
        <taxon>Aphanothecaceae</taxon>
        <taxon>Gloeothece</taxon>
        <taxon>Gloeothece citriformis</taxon>
    </lineage>
</organism>
<gene>
    <name evidence="1" type="primary">prmA</name>
    <name type="ordered locus">PCC7424_3791</name>
</gene>
<name>PRMA_GLOC7</name>
<keyword id="KW-0963">Cytoplasm</keyword>
<keyword id="KW-0489">Methyltransferase</keyword>
<keyword id="KW-1185">Reference proteome</keyword>
<keyword id="KW-0949">S-adenosyl-L-methionine</keyword>
<keyword id="KW-0808">Transferase</keyword>